<organism>
    <name type="scientific">Bdellovibrio bacteriovorus (strain ATCC 15356 / DSM 50701 / NCIMB 9529 / HD100)</name>
    <dbReference type="NCBI Taxonomy" id="264462"/>
    <lineage>
        <taxon>Bacteria</taxon>
        <taxon>Pseudomonadati</taxon>
        <taxon>Bdellovibrionota</taxon>
        <taxon>Bdellovibrionia</taxon>
        <taxon>Bdellovibrionales</taxon>
        <taxon>Pseudobdellovibrionaceae</taxon>
        <taxon>Bdellovibrio</taxon>
    </lineage>
</organism>
<comment type="function">
    <text evidence="1">DNA-dependent RNA polymerase catalyzes the transcription of DNA into RNA using the four ribonucleoside triphosphates as substrates.</text>
</comment>
<comment type="catalytic activity">
    <reaction evidence="1">
        <text>RNA(n) + a ribonucleoside 5'-triphosphate = RNA(n+1) + diphosphate</text>
        <dbReference type="Rhea" id="RHEA:21248"/>
        <dbReference type="Rhea" id="RHEA-COMP:14527"/>
        <dbReference type="Rhea" id="RHEA-COMP:17342"/>
        <dbReference type="ChEBI" id="CHEBI:33019"/>
        <dbReference type="ChEBI" id="CHEBI:61557"/>
        <dbReference type="ChEBI" id="CHEBI:140395"/>
        <dbReference type="EC" id="2.7.7.6"/>
    </reaction>
</comment>
<comment type="subunit">
    <text evidence="1">The RNAP catalytic core consists of 2 alpha, 1 beta, 1 beta' and 1 omega subunit. When a sigma factor is associated with the core the holoenzyme is formed, which can initiate transcription.</text>
</comment>
<comment type="similarity">
    <text evidence="1">Belongs to the RNA polymerase beta chain family.</text>
</comment>
<comment type="sequence caution" evidence="2">
    <conflict type="erroneous initiation">
        <sequence resource="EMBL-CDS" id="CAE80754"/>
    </conflict>
</comment>
<keyword id="KW-0240">DNA-directed RNA polymerase</keyword>
<keyword id="KW-0548">Nucleotidyltransferase</keyword>
<keyword id="KW-1185">Reference proteome</keyword>
<keyword id="KW-0804">Transcription</keyword>
<keyword id="KW-0808">Transferase</keyword>
<evidence type="ECO:0000255" key="1">
    <source>
        <dbReference type="HAMAP-Rule" id="MF_01321"/>
    </source>
</evidence>
<evidence type="ECO:0000305" key="2"/>
<sequence length="1412" mass="157078">MSDFLITESTLEKTPVTASNIRVRKSFAKNKQVIDIPNLIELQKSSYEAFIQKDMDPDRRGDAGLNGVFKSVFPITDFNNTASLEFVSYTLEPAKYDVDECRQRGMTFAAPIKVTLRLIVFDVDEETEARSIRDVKEQEVYLGEIPLMTANGSFIINGTERVVVSQLHRSPGVFFDHDGGKNNASGKLIYSARVIPYRGSWLDAEFDQKDLIHVRIDRRRKFPVTILLKALGYNSEQLLEYFYDLDEVYVKGGKLFRKLDIERMSGQRALTDIVDPKTGEALVKAGRRITRAIVKKIKDLDITELDVLPEDLEGKVLAKPLIDESTGEIIADANAELNAAIIKRSIEAGIESFFMIFFDGLTVGPYLRNTLLVDKVSNKEESLVEIYKRLRPGEPPTLEAATTFFGRLFFDPETYDLSEVGRIKINHRFGISMDECPPSHRTLTHKDILSTIKTLIDLKNGRGVIDDIDHLGNRRVRSVGELLENQYRIGLVRMERAIRERMSLQDVETMMPHDLVNAKPVNAVVKEFFGSSQLSQFMDQTNPLSEITHKRRLSALGPGGLTRDRAGFEVRDVHPTHYGRICPIETPEGPNIGLIASLATYARINNYGFIETPYRKVEAGQVSKDINYLSALEEAGHHIAPAARDEAGNKAIQTATTITRRDGEYEIVDKDKVALMDVSPSQLVSIAASLIPFLEHDDANRALMGSNMQRQAVPLLRSRAPLVGTGVERLVARDSGTSIVAQNDGIVEEVDASRIVIRRFAKGGELGANVDIYNLTKYQRTNQNTCFNQKPIVTVGDKISKGDIIADGPSTELGELALGQNILVAFTPWQGYNFEDSILISERLLKDDVYTSIHIEEFECVARDTKLGKEEITRDIANVGEEALKDLDSSGIIRIGAEVRPGFILVGKVTPKGETQLSPEEKLLRAIFGEKAGDVRDTSLRAPSGVYGTVIDAQVYSREGADRDERLSLIIEEKKRKLEKDLAVEQNVIKNNAISKLRDILVGKITTGVLLNEDGSQKLLNKGQEITEADLETVPFELLNYIPLEQDLEFQVNKIIDNARNQLDAVKLVFNEKIDRLRKGDELPPGVIKMVKVYVAIKRKMQVGDKFAGRHGNKGVVSKVLPAEDMPYLADGTPVDMVLNPLGVPSRMNIGQILEVHLGWAAHNLGKQLGAHLEKWNAENARTEMKDIFSDSDISAKLDKADDASLKSMVQRMKHGIHVGTPVFDGARESDVKGLLAKAQVPSSGKSVLFDGRTGEPFTNPVTVGIMYMLKLHHLVEEKIHARSIGPYSLVSQQPLGGKAQFGGQRLGEMEVWAIEAYGAAYSLQEFLTVKSDDVAGRTRMYESIVKGENILEPGLPESFNVLVKELQSLALNVELMESDILRDQDEDFGDEEVIEVEPVAPVASKDEPEQH</sequence>
<name>RPOB_BDEBA</name>
<accession>Q6MJ09</accession>
<dbReference type="EC" id="2.7.7.6" evidence="1"/>
<dbReference type="EMBL" id="BX842654">
    <property type="protein sequence ID" value="CAE80754.1"/>
    <property type="status" value="ALT_INIT"/>
    <property type="molecule type" value="Genomic_DNA"/>
</dbReference>
<dbReference type="RefSeq" id="WP_048349775.1">
    <property type="nucleotide sequence ID" value="NC_005363.1"/>
</dbReference>
<dbReference type="SMR" id="Q6MJ09"/>
<dbReference type="STRING" id="264462.Bd2984"/>
<dbReference type="GeneID" id="93013845"/>
<dbReference type="KEGG" id="bba:Bd2984"/>
<dbReference type="eggNOG" id="COG0085">
    <property type="taxonomic scope" value="Bacteria"/>
</dbReference>
<dbReference type="HOGENOM" id="CLU_000524_4_0_7"/>
<dbReference type="Proteomes" id="UP000008080">
    <property type="component" value="Chromosome"/>
</dbReference>
<dbReference type="GO" id="GO:0000428">
    <property type="term" value="C:DNA-directed RNA polymerase complex"/>
    <property type="evidence" value="ECO:0007669"/>
    <property type="project" value="UniProtKB-KW"/>
</dbReference>
<dbReference type="GO" id="GO:0003677">
    <property type="term" value="F:DNA binding"/>
    <property type="evidence" value="ECO:0007669"/>
    <property type="project" value="UniProtKB-UniRule"/>
</dbReference>
<dbReference type="GO" id="GO:0003899">
    <property type="term" value="F:DNA-directed RNA polymerase activity"/>
    <property type="evidence" value="ECO:0007669"/>
    <property type="project" value="UniProtKB-UniRule"/>
</dbReference>
<dbReference type="GO" id="GO:0032549">
    <property type="term" value="F:ribonucleoside binding"/>
    <property type="evidence" value="ECO:0007669"/>
    <property type="project" value="InterPro"/>
</dbReference>
<dbReference type="GO" id="GO:0006351">
    <property type="term" value="P:DNA-templated transcription"/>
    <property type="evidence" value="ECO:0007669"/>
    <property type="project" value="UniProtKB-UniRule"/>
</dbReference>
<dbReference type="CDD" id="cd00653">
    <property type="entry name" value="RNA_pol_B_RPB2"/>
    <property type="match status" value="1"/>
</dbReference>
<dbReference type="Gene3D" id="2.40.50.100">
    <property type="match status" value="1"/>
</dbReference>
<dbReference type="Gene3D" id="2.40.50.150">
    <property type="match status" value="1"/>
</dbReference>
<dbReference type="Gene3D" id="3.90.1100.10">
    <property type="match status" value="2"/>
</dbReference>
<dbReference type="Gene3D" id="2.30.150.10">
    <property type="entry name" value="DNA-directed RNA polymerase, beta subunit, external 1 domain"/>
    <property type="match status" value="1"/>
</dbReference>
<dbReference type="Gene3D" id="2.40.270.10">
    <property type="entry name" value="DNA-directed RNA polymerase, subunit 2, domain 6"/>
    <property type="match status" value="1"/>
</dbReference>
<dbReference type="Gene3D" id="3.90.1800.10">
    <property type="entry name" value="RNA polymerase alpha subunit dimerisation domain"/>
    <property type="match status" value="1"/>
</dbReference>
<dbReference type="Gene3D" id="3.90.1110.10">
    <property type="entry name" value="RNA polymerase Rpb2, domain 2"/>
    <property type="match status" value="1"/>
</dbReference>
<dbReference type="HAMAP" id="MF_01321">
    <property type="entry name" value="RNApol_bact_RpoB"/>
    <property type="match status" value="1"/>
</dbReference>
<dbReference type="InterPro" id="IPR042107">
    <property type="entry name" value="DNA-dir_RNA_pol_bsu_ext_1_sf"/>
</dbReference>
<dbReference type="InterPro" id="IPR019462">
    <property type="entry name" value="DNA-dir_RNA_pol_bsu_external_1"/>
</dbReference>
<dbReference type="InterPro" id="IPR015712">
    <property type="entry name" value="DNA-dir_RNA_pol_su2"/>
</dbReference>
<dbReference type="InterPro" id="IPR007120">
    <property type="entry name" value="DNA-dir_RNAP_su2_dom"/>
</dbReference>
<dbReference type="InterPro" id="IPR037033">
    <property type="entry name" value="DNA-dir_RNAP_su2_hyb_sf"/>
</dbReference>
<dbReference type="InterPro" id="IPR010243">
    <property type="entry name" value="RNA_pol_bsu_bac"/>
</dbReference>
<dbReference type="InterPro" id="IPR007121">
    <property type="entry name" value="RNA_pol_bsu_CS"/>
</dbReference>
<dbReference type="InterPro" id="IPR007644">
    <property type="entry name" value="RNA_pol_bsu_protrusion"/>
</dbReference>
<dbReference type="InterPro" id="IPR007642">
    <property type="entry name" value="RNA_pol_Rpb2_2"/>
</dbReference>
<dbReference type="InterPro" id="IPR037034">
    <property type="entry name" value="RNA_pol_Rpb2_2_sf"/>
</dbReference>
<dbReference type="InterPro" id="IPR007645">
    <property type="entry name" value="RNA_pol_Rpb2_3"/>
</dbReference>
<dbReference type="InterPro" id="IPR007641">
    <property type="entry name" value="RNA_pol_Rpb2_7"/>
</dbReference>
<dbReference type="InterPro" id="IPR014724">
    <property type="entry name" value="RNA_pol_RPB2_OB-fold"/>
</dbReference>
<dbReference type="NCBIfam" id="NF001616">
    <property type="entry name" value="PRK00405.1"/>
    <property type="match status" value="1"/>
</dbReference>
<dbReference type="NCBIfam" id="TIGR02013">
    <property type="entry name" value="rpoB"/>
    <property type="match status" value="1"/>
</dbReference>
<dbReference type="PANTHER" id="PTHR20856">
    <property type="entry name" value="DNA-DIRECTED RNA POLYMERASE I SUBUNIT 2"/>
    <property type="match status" value="1"/>
</dbReference>
<dbReference type="Pfam" id="PF04563">
    <property type="entry name" value="RNA_pol_Rpb2_1"/>
    <property type="match status" value="1"/>
</dbReference>
<dbReference type="Pfam" id="PF04561">
    <property type="entry name" value="RNA_pol_Rpb2_2"/>
    <property type="match status" value="2"/>
</dbReference>
<dbReference type="Pfam" id="PF04565">
    <property type="entry name" value="RNA_pol_Rpb2_3"/>
    <property type="match status" value="1"/>
</dbReference>
<dbReference type="Pfam" id="PF10385">
    <property type="entry name" value="RNA_pol_Rpb2_45"/>
    <property type="match status" value="1"/>
</dbReference>
<dbReference type="Pfam" id="PF00562">
    <property type="entry name" value="RNA_pol_Rpb2_6"/>
    <property type="match status" value="1"/>
</dbReference>
<dbReference type="Pfam" id="PF04560">
    <property type="entry name" value="RNA_pol_Rpb2_7"/>
    <property type="match status" value="1"/>
</dbReference>
<dbReference type="SUPFAM" id="SSF64484">
    <property type="entry name" value="beta and beta-prime subunits of DNA dependent RNA-polymerase"/>
    <property type="match status" value="1"/>
</dbReference>
<dbReference type="PROSITE" id="PS01166">
    <property type="entry name" value="RNA_POL_BETA"/>
    <property type="match status" value="1"/>
</dbReference>
<gene>
    <name evidence="1" type="primary">rpoB</name>
    <name type="ordered locus">Bd2984</name>
</gene>
<protein>
    <recommendedName>
        <fullName evidence="1">DNA-directed RNA polymerase subunit beta</fullName>
        <shortName evidence="1">RNAP subunit beta</shortName>
        <ecNumber evidence="1">2.7.7.6</ecNumber>
    </recommendedName>
    <alternativeName>
        <fullName evidence="1">RNA polymerase subunit beta</fullName>
    </alternativeName>
    <alternativeName>
        <fullName evidence="1">Transcriptase subunit beta</fullName>
    </alternativeName>
</protein>
<feature type="chain" id="PRO_0000224032" description="DNA-directed RNA polymerase subunit beta">
    <location>
        <begin position="1"/>
        <end position="1412"/>
    </location>
</feature>
<proteinExistence type="inferred from homology"/>
<reference key="1">
    <citation type="journal article" date="2004" name="Science">
        <title>A predator unmasked: life cycle of Bdellovibrio bacteriovorus from a genomic perspective.</title>
        <authorList>
            <person name="Rendulic S."/>
            <person name="Jagtap P."/>
            <person name="Rosinus A."/>
            <person name="Eppinger M."/>
            <person name="Baar C."/>
            <person name="Lanz C."/>
            <person name="Keller H."/>
            <person name="Lambert C."/>
            <person name="Evans K.J."/>
            <person name="Goesmann A."/>
            <person name="Meyer F."/>
            <person name="Sockett R.E."/>
            <person name="Schuster S.C."/>
        </authorList>
    </citation>
    <scope>NUCLEOTIDE SEQUENCE [LARGE SCALE GENOMIC DNA]</scope>
    <source>
        <strain>ATCC 15356 / DSM 50701 / NCIMB 9529 / HD100</strain>
    </source>
</reference>